<keyword id="KW-1003">Cell membrane</keyword>
<keyword id="KW-0325">Glycoprotein</keyword>
<keyword id="KW-0407">Ion channel</keyword>
<keyword id="KW-0406">Ion transport</keyword>
<keyword id="KW-0472">Membrane</keyword>
<keyword id="KW-0630">Potassium</keyword>
<keyword id="KW-0631">Potassium channel</keyword>
<keyword id="KW-0633">Potassium transport</keyword>
<keyword id="KW-1185">Reference proteome</keyword>
<keyword id="KW-0812">Transmembrane</keyword>
<keyword id="KW-1133">Transmembrane helix</keyword>
<keyword id="KW-0813">Transport</keyword>
<keyword id="KW-0851">Voltage-gated channel</keyword>
<name>KCNE2_MOUSE</name>
<reference key="1">
    <citation type="journal article" date="2005" name="Science">
        <title>The transcriptional landscape of the mammalian genome.</title>
        <authorList>
            <person name="Carninci P."/>
            <person name="Kasukawa T."/>
            <person name="Katayama S."/>
            <person name="Gough J."/>
            <person name="Frith M.C."/>
            <person name="Maeda N."/>
            <person name="Oyama R."/>
            <person name="Ravasi T."/>
            <person name="Lenhard B."/>
            <person name="Wells C."/>
            <person name="Kodzius R."/>
            <person name="Shimokawa K."/>
            <person name="Bajic V.B."/>
            <person name="Brenner S.E."/>
            <person name="Batalov S."/>
            <person name="Forrest A.R."/>
            <person name="Zavolan M."/>
            <person name="Davis M.J."/>
            <person name="Wilming L.G."/>
            <person name="Aidinis V."/>
            <person name="Allen J.E."/>
            <person name="Ambesi-Impiombato A."/>
            <person name="Apweiler R."/>
            <person name="Aturaliya R.N."/>
            <person name="Bailey T.L."/>
            <person name="Bansal M."/>
            <person name="Baxter L."/>
            <person name="Beisel K.W."/>
            <person name="Bersano T."/>
            <person name="Bono H."/>
            <person name="Chalk A.M."/>
            <person name="Chiu K.P."/>
            <person name="Choudhary V."/>
            <person name="Christoffels A."/>
            <person name="Clutterbuck D.R."/>
            <person name="Crowe M.L."/>
            <person name="Dalla E."/>
            <person name="Dalrymple B.P."/>
            <person name="de Bono B."/>
            <person name="Della Gatta G."/>
            <person name="di Bernardo D."/>
            <person name="Down T."/>
            <person name="Engstrom P."/>
            <person name="Fagiolini M."/>
            <person name="Faulkner G."/>
            <person name="Fletcher C.F."/>
            <person name="Fukushima T."/>
            <person name="Furuno M."/>
            <person name="Futaki S."/>
            <person name="Gariboldi M."/>
            <person name="Georgii-Hemming P."/>
            <person name="Gingeras T.R."/>
            <person name="Gojobori T."/>
            <person name="Green R.E."/>
            <person name="Gustincich S."/>
            <person name="Harbers M."/>
            <person name="Hayashi Y."/>
            <person name="Hensch T.K."/>
            <person name="Hirokawa N."/>
            <person name="Hill D."/>
            <person name="Huminiecki L."/>
            <person name="Iacono M."/>
            <person name="Ikeo K."/>
            <person name="Iwama A."/>
            <person name="Ishikawa T."/>
            <person name="Jakt M."/>
            <person name="Kanapin A."/>
            <person name="Katoh M."/>
            <person name="Kawasawa Y."/>
            <person name="Kelso J."/>
            <person name="Kitamura H."/>
            <person name="Kitano H."/>
            <person name="Kollias G."/>
            <person name="Krishnan S.P."/>
            <person name="Kruger A."/>
            <person name="Kummerfeld S.K."/>
            <person name="Kurochkin I.V."/>
            <person name="Lareau L.F."/>
            <person name="Lazarevic D."/>
            <person name="Lipovich L."/>
            <person name="Liu J."/>
            <person name="Liuni S."/>
            <person name="McWilliam S."/>
            <person name="Madan Babu M."/>
            <person name="Madera M."/>
            <person name="Marchionni L."/>
            <person name="Matsuda H."/>
            <person name="Matsuzawa S."/>
            <person name="Miki H."/>
            <person name="Mignone F."/>
            <person name="Miyake S."/>
            <person name="Morris K."/>
            <person name="Mottagui-Tabar S."/>
            <person name="Mulder N."/>
            <person name="Nakano N."/>
            <person name="Nakauchi H."/>
            <person name="Ng P."/>
            <person name="Nilsson R."/>
            <person name="Nishiguchi S."/>
            <person name="Nishikawa S."/>
            <person name="Nori F."/>
            <person name="Ohara O."/>
            <person name="Okazaki Y."/>
            <person name="Orlando V."/>
            <person name="Pang K.C."/>
            <person name="Pavan W.J."/>
            <person name="Pavesi G."/>
            <person name="Pesole G."/>
            <person name="Petrovsky N."/>
            <person name="Piazza S."/>
            <person name="Reed J."/>
            <person name="Reid J.F."/>
            <person name="Ring B.Z."/>
            <person name="Ringwald M."/>
            <person name="Rost B."/>
            <person name="Ruan Y."/>
            <person name="Salzberg S.L."/>
            <person name="Sandelin A."/>
            <person name="Schneider C."/>
            <person name="Schoenbach C."/>
            <person name="Sekiguchi K."/>
            <person name="Semple C.A."/>
            <person name="Seno S."/>
            <person name="Sessa L."/>
            <person name="Sheng Y."/>
            <person name="Shibata Y."/>
            <person name="Shimada H."/>
            <person name="Shimada K."/>
            <person name="Silva D."/>
            <person name="Sinclair B."/>
            <person name="Sperling S."/>
            <person name="Stupka E."/>
            <person name="Sugiura K."/>
            <person name="Sultana R."/>
            <person name="Takenaka Y."/>
            <person name="Taki K."/>
            <person name="Tammoja K."/>
            <person name="Tan S.L."/>
            <person name="Tang S."/>
            <person name="Taylor M.S."/>
            <person name="Tegner J."/>
            <person name="Teichmann S.A."/>
            <person name="Ueda H.R."/>
            <person name="van Nimwegen E."/>
            <person name="Verardo R."/>
            <person name="Wei C.L."/>
            <person name="Yagi K."/>
            <person name="Yamanishi H."/>
            <person name="Zabarovsky E."/>
            <person name="Zhu S."/>
            <person name="Zimmer A."/>
            <person name="Hide W."/>
            <person name="Bult C."/>
            <person name="Grimmond S.M."/>
            <person name="Teasdale R.D."/>
            <person name="Liu E.T."/>
            <person name="Brusic V."/>
            <person name="Quackenbush J."/>
            <person name="Wahlestedt C."/>
            <person name="Mattick J.S."/>
            <person name="Hume D.A."/>
            <person name="Kai C."/>
            <person name="Sasaki D."/>
            <person name="Tomaru Y."/>
            <person name="Fukuda S."/>
            <person name="Kanamori-Katayama M."/>
            <person name="Suzuki M."/>
            <person name="Aoki J."/>
            <person name="Arakawa T."/>
            <person name="Iida J."/>
            <person name="Imamura K."/>
            <person name="Itoh M."/>
            <person name="Kato T."/>
            <person name="Kawaji H."/>
            <person name="Kawagashira N."/>
            <person name="Kawashima T."/>
            <person name="Kojima M."/>
            <person name="Kondo S."/>
            <person name="Konno H."/>
            <person name="Nakano K."/>
            <person name="Ninomiya N."/>
            <person name="Nishio T."/>
            <person name="Okada M."/>
            <person name="Plessy C."/>
            <person name="Shibata K."/>
            <person name="Shiraki T."/>
            <person name="Suzuki S."/>
            <person name="Tagami M."/>
            <person name="Waki K."/>
            <person name="Watahiki A."/>
            <person name="Okamura-Oho Y."/>
            <person name="Suzuki H."/>
            <person name="Kawai J."/>
            <person name="Hayashizaki Y."/>
        </authorList>
    </citation>
    <scope>NUCLEOTIDE SEQUENCE [LARGE SCALE MRNA]</scope>
    <source>
        <strain>C57BL/6J</strain>
        <tissue>Stomach</tissue>
    </source>
</reference>
<reference key="2">
    <citation type="journal article" date="2004" name="Genome Res.">
        <title>The status, quality, and expansion of the NIH full-length cDNA project: the Mammalian Gene Collection (MGC).</title>
        <authorList>
            <consortium name="The MGC Project Team"/>
        </authorList>
    </citation>
    <scope>NUCLEOTIDE SEQUENCE [LARGE SCALE MRNA]</scope>
    <source>
        <tissue>Eye</tissue>
    </source>
</reference>
<reference key="3">
    <citation type="journal article" date="2014" name="Sci. Signal.">
        <title>KCNQ1, KCNE2, and Na+-coupled solute transporters form reciprocally regulating complexes that affect neuronal excitability.</title>
        <authorList>
            <person name="Abbott G.W."/>
            <person name="Tai K.K."/>
            <person name="Neverisky D.L."/>
            <person name="Hansler A."/>
            <person name="Hu Z."/>
            <person name="Roepke T.K."/>
            <person name="Lerner D.J."/>
            <person name="Chen Q."/>
            <person name="Liu L."/>
            <person name="Zupan B."/>
            <person name="Toth M."/>
            <person name="Haynes R."/>
            <person name="Huang X."/>
            <person name="Demirbas D."/>
            <person name="Buccafusca R."/>
            <person name="Gross S.S."/>
            <person name="Kanda V.A."/>
            <person name="Berry G.T."/>
        </authorList>
    </citation>
    <scope>FUNCTION</scope>
    <scope>SUBCELLULAR LOCATION</scope>
    <scope>INTERACTION WITH KCNQ1</scope>
    <scope>DISRUPTION PHENOTYPE</scope>
</reference>
<accession>Q9D808</accession>
<accession>Q8R1Z7</accession>
<proteinExistence type="evidence at protein level"/>
<sequence>MATLANLTQTLEDAFKKIFITYMDSWRRNTTAEEQALQARVDAENFYYVILYLMVMIGMFSFIVVAILVSTVKSKRREHSQHPYHQYIVEDWQEKYKSQILHLEDSKATIHENMGATGFTVSP</sequence>
<gene>
    <name evidence="6" type="primary">Kcne2</name>
</gene>
<comment type="function">
    <text evidence="1 2 4">Ancillary protein that functions as a regulatory subunit of the voltage-gated potassium (Kv) channel complex composed of pore-forming and potassium-conducting alpha subunits and of regulatory beta subunits. KCNE2 beta subunit modulates the gating kinetics and enhances stability of the channel complex. Alters the gating of the delayed rectifier Kv channel containing KCNB1 alpha subunit (PubMed:24595108). Associates with KCNH2/HERG alpha subunit Kv channel to form the rapidly activating component of the delayed rectifying potassium current (IKr) in heart. May associate with KCNQ2 and/or KCNQ3 alpha subunits to modulate the native M-type current (By similarity). May associate with HCN1 and HCN2 channel subunits to increase potassium current (By similarity). Forms a heterooligomer complex with KCNQ1/KVLQT1 alpha subunits which leads to currents with an apparently instantaneous activation, a rapid deactivation process and a linear current-voltage relationship and decreases the amplitude of the outward current (By similarity). KCNQ1-KCNE2 channel associates with Na(+)-coupled myo-inositol symporter in the apical membrane of choroid plexus epithelium and regulates the myo-inositol gradient between blood and cerebrospinal fluid with an impact on neuron excitability (PubMed:24595108).</text>
</comment>
<comment type="subunit">
    <text evidence="1 2 4">Interacts with KCNB1. Associates with KCNH2/ERG1. May associate with KCNQ2 and KCNQ3. Associates with HCN1 and probably HCN2. Heteromultimer with KCNC2. Interacts with KCNC2 (By similarity). Interacts with KCNQ1 (PubMed:24595108). Forms a heterooligomer complex with KCNQ1 that targets to the membrane raft and leading to currents with an apparently instantaneous activation, a rapid deactivation process and a linear current-voltage relationship and decreases the amplitude of the outward current (By similarity).</text>
</comment>
<comment type="subcellular location">
    <subcellularLocation>
        <location evidence="1 2">Cell membrane</location>
        <topology evidence="3">Single-pass type I membrane protein</topology>
    </subcellularLocation>
    <subcellularLocation>
        <location evidence="4">Apical cell membrane</location>
        <topology evidence="3">Single-pass membrane protein</topology>
    </subcellularLocation>
    <text evidence="1 4">Colocalizes with KCNB1 at the plasma membrane. Localizes at the apical membrane of the choroid plexus epithelium.</text>
</comment>
<comment type="disruption phenotype">
    <text evidence="4">Mutant mice show increased pentylenetetrazole-induced seizure susceptibility and mortality associated with a reduction of myo-inositol concentration in cerebrospinal fluid.</text>
</comment>
<comment type="similarity">
    <text evidence="5">Belongs to the potassium channel KCNE family.</text>
</comment>
<evidence type="ECO:0000250" key="1">
    <source>
        <dbReference type="UniProtKB" id="P63161"/>
    </source>
</evidence>
<evidence type="ECO:0000250" key="2">
    <source>
        <dbReference type="UniProtKB" id="Q9Y6J6"/>
    </source>
</evidence>
<evidence type="ECO:0000255" key="3"/>
<evidence type="ECO:0000269" key="4">
    <source>
    </source>
</evidence>
<evidence type="ECO:0000305" key="5"/>
<evidence type="ECO:0000312" key="6">
    <source>
        <dbReference type="MGI" id="MGI:1891123"/>
    </source>
</evidence>
<feature type="chain" id="PRO_0000144286" description="Potassium voltage-gated channel subfamily E member 2">
    <location>
        <begin position="1"/>
        <end position="123"/>
    </location>
</feature>
<feature type="transmembrane region" description="Helical" evidence="3">
    <location>
        <begin position="49"/>
        <end position="69"/>
    </location>
</feature>
<feature type="topological domain" description="Cytoplasmic" evidence="3">
    <location>
        <begin position="70"/>
        <end position="123"/>
    </location>
</feature>
<feature type="glycosylation site" description="N-linked (GlcNAc...) asparagine" evidence="3">
    <location>
        <position position="6"/>
    </location>
</feature>
<feature type="glycosylation site" description="N-linked (GlcNAc...) asparagine" evidence="3">
    <location>
        <position position="29"/>
    </location>
</feature>
<feature type="sequence conflict" description="In Ref. 1; BAB25781." evidence="5" ref="1">
    <original>H</original>
    <variation>D</variation>
    <location>
        <position position="82"/>
    </location>
</feature>
<dbReference type="EMBL" id="AK008619">
    <property type="protein sequence ID" value="BAB25781.1"/>
    <property type="molecule type" value="mRNA"/>
</dbReference>
<dbReference type="EMBL" id="BC022699">
    <property type="protein sequence ID" value="AAH22699.1"/>
    <property type="molecule type" value="mRNA"/>
</dbReference>
<dbReference type="CCDS" id="CCDS28333.1"/>
<dbReference type="RefSeq" id="NP_598871.1">
    <property type="nucleotide sequence ID" value="NM_134110.3"/>
</dbReference>
<dbReference type="RefSeq" id="XP_006523096.1">
    <property type="nucleotide sequence ID" value="XM_006523033.3"/>
</dbReference>
<dbReference type="SMR" id="Q9D808"/>
<dbReference type="ComplexPortal" id="CPX-3197">
    <property type="entry name" value="Voltage-gated potassium channel complex variant 2"/>
</dbReference>
<dbReference type="FunCoup" id="Q9D808">
    <property type="interactions" value="201"/>
</dbReference>
<dbReference type="STRING" id="10090.ENSMUSP00000048849"/>
<dbReference type="TCDB" id="8.A.10.2.1">
    <property type="family name" value="the slow voltage-gated k+ channel accessory protein (mink) family"/>
</dbReference>
<dbReference type="GlyCosmos" id="Q9D808">
    <property type="glycosylation" value="2 sites, No reported glycans"/>
</dbReference>
<dbReference type="GlyGen" id="Q9D808">
    <property type="glycosylation" value="2 sites, 2 N-linked glycans (2 sites)"/>
</dbReference>
<dbReference type="iPTMnet" id="Q9D808"/>
<dbReference type="PhosphoSitePlus" id="Q9D808"/>
<dbReference type="PaxDb" id="10090-ENSMUSP00000048849"/>
<dbReference type="ProteomicsDB" id="269452"/>
<dbReference type="DNASU" id="246133"/>
<dbReference type="GeneID" id="246133"/>
<dbReference type="KEGG" id="mmu:246133"/>
<dbReference type="UCSC" id="uc007zyw.2">
    <property type="organism name" value="mouse"/>
</dbReference>
<dbReference type="AGR" id="MGI:1891123"/>
<dbReference type="CTD" id="9992"/>
<dbReference type="MGI" id="MGI:1891123">
    <property type="gene designation" value="Kcne2"/>
</dbReference>
<dbReference type="eggNOG" id="ENOG502S1GJ">
    <property type="taxonomic scope" value="Eukaryota"/>
</dbReference>
<dbReference type="InParanoid" id="Q9D808"/>
<dbReference type="OrthoDB" id="9267127at2759"/>
<dbReference type="PhylomeDB" id="Q9D808"/>
<dbReference type="TreeFam" id="TF336058"/>
<dbReference type="Reactome" id="R-MMU-5576890">
    <property type="pathway name" value="Phase 3 - rapid repolarisation"/>
</dbReference>
<dbReference type="Reactome" id="R-MMU-5576893">
    <property type="pathway name" value="Phase 2 - plateau phase"/>
</dbReference>
<dbReference type="BioGRID-ORCS" id="246133">
    <property type="hits" value="3 hits in 78 CRISPR screens"/>
</dbReference>
<dbReference type="PRO" id="PR:Q9D808"/>
<dbReference type="Proteomes" id="UP000000589">
    <property type="component" value="Unplaced"/>
</dbReference>
<dbReference type="RNAct" id="Q9D808">
    <property type="molecule type" value="protein"/>
</dbReference>
<dbReference type="GO" id="GO:0016324">
    <property type="term" value="C:apical plasma membrane"/>
    <property type="evidence" value="ECO:0000314"/>
    <property type="project" value="UniProtKB"/>
</dbReference>
<dbReference type="GO" id="GO:0016020">
    <property type="term" value="C:membrane"/>
    <property type="evidence" value="ECO:0000314"/>
    <property type="project" value="MGI"/>
</dbReference>
<dbReference type="GO" id="GO:0005886">
    <property type="term" value="C:plasma membrane"/>
    <property type="evidence" value="ECO:0000250"/>
    <property type="project" value="UniProtKB"/>
</dbReference>
<dbReference type="GO" id="GO:0008076">
    <property type="term" value="C:voltage-gated potassium channel complex"/>
    <property type="evidence" value="ECO:0000314"/>
    <property type="project" value="MGI"/>
</dbReference>
<dbReference type="GO" id="GO:0015459">
    <property type="term" value="F:potassium channel regulator activity"/>
    <property type="evidence" value="ECO:0000250"/>
    <property type="project" value="UniProtKB"/>
</dbReference>
<dbReference type="GO" id="GO:0005249">
    <property type="term" value="F:voltage-gated potassium channel activity"/>
    <property type="evidence" value="ECO:0007669"/>
    <property type="project" value="InterPro"/>
</dbReference>
<dbReference type="GO" id="GO:0051649">
    <property type="term" value="P:establishment of localization in cell"/>
    <property type="evidence" value="ECO:0000315"/>
    <property type="project" value="MGI"/>
</dbReference>
<dbReference type="GO" id="GO:0015705">
    <property type="term" value="P:iodide transport"/>
    <property type="evidence" value="ECO:0000315"/>
    <property type="project" value="MGI"/>
</dbReference>
<dbReference type="GO" id="GO:0033555">
    <property type="term" value="P:multicellular organismal response to stress"/>
    <property type="evidence" value="ECO:0000315"/>
    <property type="project" value="MGI"/>
</dbReference>
<dbReference type="GO" id="GO:0015798">
    <property type="term" value="P:myo-inositol transport"/>
    <property type="evidence" value="ECO:0000315"/>
    <property type="project" value="MGI"/>
</dbReference>
<dbReference type="GO" id="GO:1902260">
    <property type="term" value="P:negative regulation of delayed rectifier potassium channel activity"/>
    <property type="evidence" value="ECO:0000250"/>
    <property type="project" value="UniProtKB"/>
</dbReference>
<dbReference type="GO" id="GO:0071805">
    <property type="term" value="P:potassium ion transmembrane transport"/>
    <property type="evidence" value="ECO:0000315"/>
    <property type="project" value="MGI"/>
</dbReference>
<dbReference type="GO" id="GO:0008104">
    <property type="term" value="P:protein localization"/>
    <property type="evidence" value="ECO:0000315"/>
    <property type="project" value="MGI"/>
</dbReference>
<dbReference type="GO" id="GO:0060307">
    <property type="term" value="P:regulation of ventricular cardiac muscle cell membrane repolarization"/>
    <property type="evidence" value="ECO:0000315"/>
    <property type="project" value="MGI"/>
</dbReference>
<dbReference type="GO" id="GO:0086005">
    <property type="term" value="P:ventricular cardiac muscle cell action potential"/>
    <property type="evidence" value="ECO:0000315"/>
    <property type="project" value="MGI"/>
</dbReference>
<dbReference type="InterPro" id="IPR000369">
    <property type="entry name" value="K_chnl_KCNE"/>
</dbReference>
<dbReference type="InterPro" id="IPR005425">
    <property type="entry name" value="K_chnl_volt-dep_bsu_KCNE2"/>
</dbReference>
<dbReference type="PANTHER" id="PTHR15282">
    <property type="entry name" value="POTASSIUM VOLTAGE-GATED CHANNEL SUBFAMILY E MEMBER 1, 3"/>
    <property type="match status" value="1"/>
</dbReference>
<dbReference type="PANTHER" id="PTHR15282:SF8">
    <property type="entry name" value="POTASSIUM VOLTAGE-GATED CHANNEL SUBFAMILY E MEMBER 2"/>
    <property type="match status" value="1"/>
</dbReference>
<dbReference type="Pfam" id="PF02060">
    <property type="entry name" value="ISK_Channel"/>
    <property type="match status" value="1"/>
</dbReference>
<dbReference type="PRINTS" id="PR01605">
    <property type="entry name" value="KCNE2CHANNEL"/>
</dbReference>
<protein>
    <recommendedName>
        <fullName>Potassium voltage-gated channel subfamily E member 2</fullName>
    </recommendedName>
    <alternativeName>
        <fullName>MinK-related peptide 1</fullName>
    </alternativeName>
    <alternativeName>
        <fullName>Minimum potassium ion channel-related peptide 1</fullName>
    </alternativeName>
    <alternativeName>
        <fullName>Potassium channel subunit beta MiRP1</fullName>
    </alternativeName>
</protein>
<organism>
    <name type="scientific">Mus musculus</name>
    <name type="common">Mouse</name>
    <dbReference type="NCBI Taxonomy" id="10090"/>
    <lineage>
        <taxon>Eukaryota</taxon>
        <taxon>Metazoa</taxon>
        <taxon>Chordata</taxon>
        <taxon>Craniata</taxon>
        <taxon>Vertebrata</taxon>
        <taxon>Euteleostomi</taxon>
        <taxon>Mammalia</taxon>
        <taxon>Eutheria</taxon>
        <taxon>Euarchontoglires</taxon>
        <taxon>Glires</taxon>
        <taxon>Rodentia</taxon>
        <taxon>Myomorpha</taxon>
        <taxon>Muroidea</taxon>
        <taxon>Muridae</taxon>
        <taxon>Murinae</taxon>
        <taxon>Mus</taxon>
        <taxon>Mus</taxon>
    </lineage>
</organism>